<accession>Q59683</accession>
<reference key="1">
    <citation type="journal article" date="1996" name="Biochimie">
        <title>Comparative analysis of the cya locus in enterobacteria and related Gram-negative facultative anaerobes.</title>
        <authorList>
            <person name="Trotot P."/>
            <person name="Sismeiro O."/>
            <person name="Vivares C."/>
            <person name="Glaser P."/>
            <person name="Bresson-Roy A."/>
            <person name="Danchin A."/>
        </authorList>
    </citation>
    <scope>NUCLEOTIDE SEQUENCE [GENOMIC DNA]</scope>
</reference>
<comment type="function">
    <text evidence="1">Catalyzes cyclization of the linear tetrapyrrole, hydroxymethylbilane, to the macrocyclic uroporphyrinogen III.</text>
</comment>
<comment type="catalytic activity">
    <reaction>
        <text>hydroxymethylbilane = uroporphyrinogen III + H2O</text>
        <dbReference type="Rhea" id="RHEA:18965"/>
        <dbReference type="ChEBI" id="CHEBI:15377"/>
        <dbReference type="ChEBI" id="CHEBI:57308"/>
        <dbReference type="ChEBI" id="CHEBI:57845"/>
        <dbReference type="EC" id="4.2.1.75"/>
    </reaction>
</comment>
<comment type="pathway">
    <text>Porphyrin-containing compound metabolism; protoporphyrin-IX biosynthesis; coproporphyrinogen-III from 5-aminolevulinate: step 3/4.</text>
</comment>
<comment type="similarity">
    <text evidence="2">Belongs to the uroporphyrinogen-III synthase family.</text>
</comment>
<sequence>MSILITRPSPAGEQLTQRLIDAGKHAFHAPLIEIAAGKELSILENKLNKLSTGDYLFLLSKNAVWYANWQLNQLQQSWPDTLFYYGIGQSTAEEFQQLTAHSIRYPEFGETSEDLLALSSLQQIENKRVLLLRGNGGRELLATTLRQRGAIVDECECYQRLFIDYVSEEFALKWKNAQVEYLCGHQCEMLQQLLSSRWI</sequence>
<evidence type="ECO:0000250" key="1"/>
<evidence type="ECO:0000305" key="2"/>
<name>HEM4_PROMI</name>
<protein>
    <recommendedName>
        <fullName>Uroporphyrinogen-III synthase</fullName>
        <shortName>UROS</shortName>
        <ecNumber>4.2.1.75</ecNumber>
    </recommendedName>
    <alternativeName>
        <fullName>Hydroxymethylbilane hydrolyase [cyclizing]</fullName>
    </alternativeName>
    <alternativeName>
        <fullName>Uroporphyrinogen-III cosynthase</fullName>
    </alternativeName>
</protein>
<dbReference type="EC" id="4.2.1.75"/>
<dbReference type="EMBL" id="U22969">
    <property type="protein sequence ID" value="AAC44328.1"/>
    <property type="molecule type" value="Genomic_DNA"/>
</dbReference>
<dbReference type="SMR" id="Q59683"/>
<dbReference type="STRING" id="584.AOUC001_17910"/>
<dbReference type="UniPathway" id="UPA00251">
    <property type="reaction ID" value="UER00320"/>
</dbReference>
<dbReference type="GO" id="GO:0004852">
    <property type="term" value="F:uroporphyrinogen-III synthase activity"/>
    <property type="evidence" value="ECO:0007669"/>
    <property type="project" value="UniProtKB-EC"/>
</dbReference>
<dbReference type="GO" id="GO:0006782">
    <property type="term" value="P:protoporphyrinogen IX biosynthetic process"/>
    <property type="evidence" value="ECO:0007669"/>
    <property type="project" value="UniProtKB-UniPathway"/>
</dbReference>
<dbReference type="GO" id="GO:0006780">
    <property type="term" value="P:uroporphyrinogen III biosynthetic process"/>
    <property type="evidence" value="ECO:0007669"/>
    <property type="project" value="InterPro"/>
</dbReference>
<dbReference type="CDD" id="cd06578">
    <property type="entry name" value="HemD"/>
    <property type="match status" value="1"/>
</dbReference>
<dbReference type="Gene3D" id="3.40.50.10090">
    <property type="match status" value="2"/>
</dbReference>
<dbReference type="InterPro" id="IPR036108">
    <property type="entry name" value="4pyrrol_syn_uPrphyn_synt_sf"/>
</dbReference>
<dbReference type="InterPro" id="IPR003754">
    <property type="entry name" value="4pyrrol_synth_uPrphyn_synth"/>
</dbReference>
<dbReference type="InterPro" id="IPR039793">
    <property type="entry name" value="UROS/Hem4"/>
</dbReference>
<dbReference type="PANTHER" id="PTHR38042">
    <property type="entry name" value="UROPORPHYRINOGEN-III SYNTHASE, CHLOROPLASTIC"/>
    <property type="match status" value="1"/>
</dbReference>
<dbReference type="PANTHER" id="PTHR38042:SF1">
    <property type="entry name" value="UROPORPHYRINOGEN-III SYNTHASE, CHLOROPLASTIC"/>
    <property type="match status" value="1"/>
</dbReference>
<dbReference type="Pfam" id="PF02602">
    <property type="entry name" value="HEM4"/>
    <property type="match status" value="1"/>
</dbReference>
<dbReference type="SUPFAM" id="SSF69618">
    <property type="entry name" value="HemD-like"/>
    <property type="match status" value="1"/>
</dbReference>
<keyword id="KW-0456">Lyase</keyword>
<keyword id="KW-0627">Porphyrin biosynthesis</keyword>
<feature type="chain" id="PRO_0000135244" description="Uroporphyrinogen-III synthase">
    <location>
        <begin position="1"/>
        <end position="199"/>
    </location>
</feature>
<gene>
    <name type="primary">hemD</name>
</gene>
<proteinExistence type="inferred from homology"/>
<organism>
    <name type="scientific">Proteus mirabilis</name>
    <dbReference type="NCBI Taxonomy" id="584"/>
    <lineage>
        <taxon>Bacteria</taxon>
        <taxon>Pseudomonadati</taxon>
        <taxon>Pseudomonadota</taxon>
        <taxon>Gammaproteobacteria</taxon>
        <taxon>Enterobacterales</taxon>
        <taxon>Morganellaceae</taxon>
        <taxon>Proteus</taxon>
    </lineage>
</organism>